<reference key="1">
    <citation type="journal article" date="1998" name="J. Biol. Chem.">
        <title>Identification and characterization of a novel human aldose reductase-like gene.</title>
        <authorList>
            <person name="Cao D."/>
            <person name="Fan S.T."/>
            <person name="Chung S.S.M."/>
        </authorList>
    </citation>
    <scope>NUCLEOTIDE SEQUENCE [MRNA]</scope>
    <scope>VARIANT ASP-313</scope>
    <scope>FUNCTION</scope>
    <scope>TISSUE SPECIFICITY</scope>
    <scope>INDUCTION</scope>
    <source>
        <tissue>Liver tumor</tissue>
    </source>
</reference>
<reference key="2">
    <citation type="journal article" date="1998" name="Biochim. Biophys. Acta">
        <title>Sequence and expression levels in human tissues of a new member of the aldo-keto reductase family.</title>
        <authorList>
            <person name="Hyndman D.J."/>
            <person name="Flynn T.G."/>
        </authorList>
    </citation>
    <scope>NUCLEOTIDE SEQUENCE [MRNA]</scope>
    <source>
        <tissue>Small intestine</tissue>
    </source>
</reference>
<reference key="3">
    <citation type="submission" date="2002-06" db="EMBL/GenBank/DDBJ databases">
        <title>Representational difference analysis based identification and full-length sequencing of a gene of the aldo-ketoreductase family strongly overexpressed in hepatocellular carcinoma.</title>
        <authorList>
            <person name="Heringlake S."/>
        </authorList>
    </citation>
    <scope>NUCLEOTIDE SEQUENCE [MRNA]</scope>
    <scope>VARIANT ASP-313</scope>
</reference>
<reference key="4">
    <citation type="submission" date="2003-05" db="EMBL/GenBank/DDBJ databases">
        <title>Cloning of human full-length CDSs in BD Creator(TM) system donor vector.</title>
        <authorList>
            <person name="Kalnine N."/>
            <person name="Chen X."/>
            <person name="Rolfs A."/>
            <person name="Halleck A."/>
            <person name="Hines L."/>
            <person name="Eisenstein S."/>
            <person name="Koundinya M."/>
            <person name="Raphael J."/>
            <person name="Moreira D."/>
            <person name="Kelley T."/>
            <person name="LaBaer J."/>
            <person name="Lin Y."/>
            <person name="Phelan M."/>
            <person name="Farmer A."/>
        </authorList>
    </citation>
    <scope>NUCLEOTIDE SEQUENCE [LARGE SCALE MRNA]</scope>
    <scope>VARIANT ASP-313</scope>
</reference>
<reference key="5">
    <citation type="submission" date="2004-06" db="EMBL/GenBank/DDBJ databases">
        <title>Cloning of human full open reading frames in Gateway(TM) system entry vector (pDONR201).</title>
        <authorList>
            <person name="Ebert L."/>
            <person name="Schick M."/>
            <person name="Neubert P."/>
            <person name="Schatten R."/>
            <person name="Henze S."/>
            <person name="Korn B."/>
        </authorList>
    </citation>
    <scope>NUCLEOTIDE SEQUENCE [LARGE SCALE MRNA]</scope>
    <scope>VARIANT ASP-313</scope>
</reference>
<reference key="6">
    <citation type="journal article" date="2003" name="Nature">
        <title>The DNA sequence of human chromosome 7.</title>
        <authorList>
            <person name="Hillier L.W."/>
            <person name="Fulton R.S."/>
            <person name="Fulton L.A."/>
            <person name="Graves T.A."/>
            <person name="Pepin K.H."/>
            <person name="Wagner-McPherson C."/>
            <person name="Layman D."/>
            <person name="Maas J."/>
            <person name="Jaeger S."/>
            <person name="Walker R."/>
            <person name="Wylie K."/>
            <person name="Sekhon M."/>
            <person name="Becker M.C."/>
            <person name="O'Laughlin M.D."/>
            <person name="Schaller M.E."/>
            <person name="Fewell G.A."/>
            <person name="Delehaunty K.D."/>
            <person name="Miner T.L."/>
            <person name="Nash W.E."/>
            <person name="Cordes M."/>
            <person name="Du H."/>
            <person name="Sun H."/>
            <person name="Edwards J."/>
            <person name="Bradshaw-Cordum H."/>
            <person name="Ali J."/>
            <person name="Andrews S."/>
            <person name="Isak A."/>
            <person name="Vanbrunt A."/>
            <person name="Nguyen C."/>
            <person name="Du F."/>
            <person name="Lamar B."/>
            <person name="Courtney L."/>
            <person name="Kalicki J."/>
            <person name="Ozersky P."/>
            <person name="Bielicki L."/>
            <person name="Scott K."/>
            <person name="Holmes A."/>
            <person name="Harkins R."/>
            <person name="Harris A."/>
            <person name="Strong C.M."/>
            <person name="Hou S."/>
            <person name="Tomlinson C."/>
            <person name="Dauphin-Kohlberg S."/>
            <person name="Kozlowicz-Reilly A."/>
            <person name="Leonard S."/>
            <person name="Rohlfing T."/>
            <person name="Rock S.M."/>
            <person name="Tin-Wollam A.-M."/>
            <person name="Abbott A."/>
            <person name="Minx P."/>
            <person name="Maupin R."/>
            <person name="Strowmatt C."/>
            <person name="Latreille P."/>
            <person name="Miller N."/>
            <person name="Johnson D."/>
            <person name="Murray J."/>
            <person name="Woessner J.P."/>
            <person name="Wendl M.C."/>
            <person name="Yang S.-P."/>
            <person name="Schultz B.R."/>
            <person name="Wallis J.W."/>
            <person name="Spieth J."/>
            <person name="Bieri T.A."/>
            <person name="Nelson J.O."/>
            <person name="Berkowicz N."/>
            <person name="Wohldmann P.E."/>
            <person name="Cook L.L."/>
            <person name="Hickenbotham M.T."/>
            <person name="Eldred J."/>
            <person name="Williams D."/>
            <person name="Bedell J.A."/>
            <person name="Mardis E.R."/>
            <person name="Clifton S.W."/>
            <person name="Chissoe S.L."/>
            <person name="Marra M.A."/>
            <person name="Raymond C."/>
            <person name="Haugen E."/>
            <person name="Gillett W."/>
            <person name="Zhou Y."/>
            <person name="James R."/>
            <person name="Phelps K."/>
            <person name="Iadanoto S."/>
            <person name="Bubb K."/>
            <person name="Simms E."/>
            <person name="Levy R."/>
            <person name="Clendenning J."/>
            <person name="Kaul R."/>
            <person name="Kent W.J."/>
            <person name="Furey T.S."/>
            <person name="Baertsch R.A."/>
            <person name="Brent M.R."/>
            <person name="Keibler E."/>
            <person name="Flicek P."/>
            <person name="Bork P."/>
            <person name="Suyama M."/>
            <person name="Bailey J.A."/>
            <person name="Portnoy M.E."/>
            <person name="Torrents D."/>
            <person name="Chinwalla A.T."/>
            <person name="Gish W.R."/>
            <person name="Eddy S.R."/>
            <person name="McPherson J.D."/>
            <person name="Olson M.V."/>
            <person name="Eichler E.E."/>
            <person name="Green E.D."/>
            <person name="Waterston R.H."/>
            <person name="Wilson R.K."/>
        </authorList>
    </citation>
    <scope>NUCLEOTIDE SEQUENCE [LARGE SCALE GENOMIC DNA]</scope>
</reference>
<reference key="7">
    <citation type="journal article" date="2003" name="Science">
        <title>Human chromosome 7: DNA sequence and biology.</title>
        <authorList>
            <person name="Scherer S.W."/>
            <person name="Cheung J."/>
            <person name="MacDonald J.R."/>
            <person name="Osborne L.R."/>
            <person name="Nakabayashi K."/>
            <person name="Herbrick J.-A."/>
            <person name="Carson A.R."/>
            <person name="Parker-Katiraee L."/>
            <person name="Skaug J."/>
            <person name="Khaja R."/>
            <person name="Zhang J."/>
            <person name="Hudek A.K."/>
            <person name="Li M."/>
            <person name="Haddad M."/>
            <person name="Duggan G.E."/>
            <person name="Fernandez B.A."/>
            <person name="Kanematsu E."/>
            <person name="Gentles S."/>
            <person name="Christopoulos C.C."/>
            <person name="Choufani S."/>
            <person name="Kwasnicka D."/>
            <person name="Zheng X.H."/>
            <person name="Lai Z."/>
            <person name="Nusskern D.R."/>
            <person name="Zhang Q."/>
            <person name="Gu Z."/>
            <person name="Lu F."/>
            <person name="Zeesman S."/>
            <person name="Nowaczyk M.J."/>
            <person name="Teshima I."/>
            <person name="Chitayat D."/>
            <person name="Shuman C."/>
            <person name="Weksberg R."/>
            <person name="Zackai E.H."/>
            <person name="Grebe T.A."/>
            <person name="Cox S.R."/>
            <person name="Kirkpatrick S.J."/>
            <person name="Rahman N."/>
            <person name="Friedman J.M."/>
            <person name="Heng H.H.Q."/>
            <person name="Pelicci P.G."/>
            <person name="Lo-Coco F."/>
            <person name="Belloni E."/>
            <person name="Shaffer L.G."/>
            <person name="Pober B."/>
            <person name="Morton C.C."/>
            <person name="Gusella J.F."/>
            <person name="Bruns G.A.P."/>
            <person name="Korf B.R."/>
            <person name="Quade B.J."/>
            <person name="Ligon A.H."/>
            <person name="Ferguson H."/>
            <person name="Higgins A.W."/>
            <person name="Leach N.T."/>
            <person name="Herrick S.R."/>
            <person name="Lemyre E."/>
            <person name="Farra C.G."/>
            <person name="Kim H.-G."/>
            <person name="Summers A.M."/>
            <person name="Gripp K.W."/>
            <person name="Roberts W."/>
            <person name="Szatmari P."/>
            <person name="Winsor E.J.T."/>
            <person name="Grzeschik K.-H."/>
            <person name="Teebi A."/>
            <person name="Minassian B.A."/>
            <person name="Kere J."/>
            <person name="Armengol L."/>
            <person name="Pujana M.A."/>
            <person name="Estivill X."/>
            <person name="Wilson M.D."/>
            <person name="Koop B.F."/>
            <person name="Tosi S."/>
            <person name="Moore G.E."/>
            <person name="Boright A.P."/>
            <person name="Zlotorynski E."/>
            <person name="Kerem B."/>
            <person name="Kroisel P.M."/>
            <person name="Petek E."/>
            <person name="Oscier D.G."/>
            <person name="Mould S.J."/>
            <person name="Doehner H."/>
            <person name="Doehner K."/>
            <person name="Rommens J.M."/>
            <person name="Vincent J.B."/>
            <person name="Venter J.C."/>
            <person name="Li P.W."/>
            <person name="Mural R.J."/>
            <person name="Adams M.D."/>
            <person name="Tsui L.-C."/>
        </authorList>
    </citation>
    <scope>NUCLEOTIDE SEQUENCE [LARGE SCALE GENOMIC DNA]</scope>
</reference>
<reference key="8">
    <citation type="submission" date="2005-07" db="EMBL/GenBank/DDBJ databases">
        <authorList>
            <person name="Mural R.J."/>
            <person name="Istrail S."/>
            <person name="Sutton G.G."/>
            <person name="Florea L."/>
            <person name="Halpern A.L."/>
            <person name="Mobarry C.M."/>
            <person name="Lippert R."/>
            <person name="Walenz B."/>
            <person name="Shatkay H."/>
            <person name="Dew I."/>
            <person name="Miller J.R."/>
            <person name="Flanigan M.J."/>
            <person name="Edwards N.J."/>
            <person name="Bolanos R."/>
            <person name="Fasulo D."/>
            <person name="Halldorsson B.V."/>
            <person name="Hannenhalli S."/>
            <person name="Turner R."/>
            <person name="Yooseph S."/>
            <person name="Lu F."/>
            <person name="Nusskern D.R."/>
            <person name="Shue B.C."/>
            <person name="Zheng X.H."/>
            <person name="Zhong F."/>
            <person name="Delcher A.L."/>
            <person name="Huson D.H."/>
            <person name="Kravitz S.A."/>
            <person name="Mouchard L."/>
            <person name="Reinert K."/>
            <person name="Remington K.A."/>
            <person name="Clark A.G."/>
            <person name="Waterman M.S."/>
            <person name="Eichler E.E."/>
            <person name="Adams M.D."/>
            <person name="Hunkapiller M.W."/>
            <person name="Myers E.W."/>
            <person name="Venter J.C."/>
        </authorList>
    </citation>
    <scope>NUCLEOTIDE SEQUENCE [LARGE SCALE GENOMIC DNA]</scope>
</reference>
<reference key="9">
    <citation type="journal article" date="2004" name="Genome Res.">
        <title>The status, quality, and expansion of the NIH full-length cDNA project: the Mammalian Gene Collection (MGC).</title>
        <authorList>
            <consortium name="The MGC Project Team"/>
        </authorList>
    </citation>
    <scope>NUCLEOTIDE SEQUENCE [LARGE SCALE MRNA]</scope>
    <scope>VARIANT ASP-313</scope>
    <source>
        <tissue>Pancreas</tissue>
    </source>
</reference>
<reference key="10">
    <citation type="journal article" date="1998" name="Hepatology">
        <title>New member of aldose reductase family proteins overexpressed in human hepatocellular carcinoma.</title>
        <authorList>
            <person name="Scuric Z."/>
            <person name="Stain S.C."/>
            <person name="Anderson W.F."/>
            <person name="Hwang J.-J."/>
        </authorList>
    </citation>
    <scope>NUCLEOTIDE SEQUENCE [MRNA] OF 232-316</scope>
    <scope>VARIANT ASP-313</scope>
</reference>
<reference key="11">
    <citation type="journal article" date="2003" name="Biochem. J.">
        <title>Human aldose reductase and human small intestine aldose reductase are efficient retinal reductases: consequences for retinoid metabolism.</title>
        <authorList>
            <person name="Crosas B."/>
            <person name="Hyndman D.J."/>
            <person name="Gallego O."/>
            <person name="Martras S."/>
            <person name="Pares X."/>
            <person name="Flynn T.G."/>
            <person name="Farres J."/>
        </authorList>
    </citation>
    <scope>CATALYTIC ACTIVITY</scope>
    <scope>BIOPHYSICOCHEMICAL PROPERTIES</scope>
    <scope>ACTIVITY REGULATION</scope>
    <scope>FUNCTION</scope>
    <scope>SUBSTRATE SPECIFICITY</scope>
</reference>
<reference key="12">
    <citation type="journal article" date="2005" name="Clin. Cancer Res.">
        <title>Overexpression of the aldo-keto reductase family protein AKR1B10 is highly correlated with smokers' non-small cell lung carcinomas.</title>
        <authorList>
            <person name="Fukumoto S."/>
            <person name="Yamauchi N."/>
            <person name="Moriguchi H."/>
            <person name="Hippo Y."/>
            <person name="Watanabe A."/>
            <person name="Shibahara J."/>
            <person name="Taniguchi H."/>
            <person name="Ishikawa S."/>
            <person name="Ito H."/>
            <person name="Yamamoto S."/>
            <person name="Iwanari H."/>
            <person name="Hironaka M."/>
            <person name="Ishikawa Y."/>
            <person name="Niki T."/>
            <person name="Sohara Y."/>
            <person name="Kodama T."/>
            <person name="Nishimura M."/>
            <person name="Fukayama M."/>
            <person name="Dosaka-Akita H."/>
            <person name="Aburatani H."/>
        </authorList>
    </citation>
    <scope>INDUCTION</scope>
</reference>
<reference key="13">
    <citation type="journal article" date="2009" name="Science">
        <title>Lysine acetylation targets protein complexes and co-regulates major cellular functions.</title>
        <authorList>
            <person name="Choudhary C."/>
            <person name="Kumar C."/>
            <person name="Gnad F."/>
            <person name="Nielsen M.L."/>
            <person name="Rehman M."/>
            <person name="Walther T.C."/>
            <person name="Olsen J.V."/>
            <person name="Mann M."/>
        </authorList>
    </citation>
    <scope>ACETYLATION [LARGE SCALE ANALYSIS] AT LYS-125 AND LYS-263</scope>
    <scope>IDENTIFICATION BY MASS SPECTROMETRY [LARGE SCALE ANALYSIS]</scope>
</reference>
<reference key="14">
    <citation type="journal article" date="2011" name="Biochem. J.">
        <title>Aldo-keto reductase family 1, member B10 is secreted through a lysosome-mediated non-classical pathway.</title>
        <authorList>
            <person name="Luo D.X."/>
            <person name="Huang M.C."/>
            <person name="Ma J."/>
            <person name="Gao Z."/>
            <person name="Liao D.F."/>
            <person name="Cao D."/>
        </authorList>
    </citation>
    <scope>SUBCELLULAR LOCATION</scope>
</reference>
<reference key="15">
    <citation type="journal article" date="2009" name="Biochem. Biophys. Res. Commun.">
        <title>Aldo-keto reductase family 1 B10 protein detoxifies dietary and lipid-derived alpha, beta-unsaturated carbonyls at physiological levels.</title>
        <authorList>
            <person name="Zhong L."/>
            <person name="Liu Z."/>
            <person name="Yan R."/>
            <person name="Johnson S."/>
            <person name="Zhao Y."/>
            <person name="Fang X."/>
            <person name="Cao D."/>
        </authorList>
    </citation>
    <scope>FUNCTION</scope>
    <scope>CATALYTIC ACTIVITY</scope>
    <scope>SUBSTRATE SPECIFICITY</scope>
    <scope>BIOPHYSICOCHEMICAL PROPERTIES</scope>
</reference>
<reference key="16">
    <citation type="journal article" date="2009" name="Chem. Biol. Interact.">
        <title>Role of human aldo-keto-reductase AKR1B10 in the protection against toxic aldehydes.</title>
        <authorList>
            <person name="Martin H.J."/>
            <person name="Maser E."/>
        </authorList>
    </citation>
    <scope>FUNCTION</scope>
    <scope>MUTAGENESIS OF CYS-299</scope>
    <scope>CATALYTIC ACTIVITY</scope>
    <scope>SUBSTRATE SPECIFICITY</scope>
    <scope>BIOPHYSICOCHEMICAL PROPERTIES</scope>
</reference>
<reference key="17">
    <citation type="journal article" date="2007" name="Proc. Natl. Acad. Sci. U.S.A.">
        <title>Structural basis for the high all-trans-retinaldehyde reductase activity of the tumor marker AKR1B10.</title>
        <authorList>
            <person name="Gallego O."/>
            <person name="Ruiz F.X."/>
            <person name="Ardevol A."/>
            <person name="Dominguez M."/>
            <person name="Alvarez R."/>
            <person name="de Lera A.R."/>
            <person name="Rovira C."/>
            <person name="Farres J."/>
            <person name="Fita I."/>
            <person name="Pares X."/>
        </authorList>
    </citation>
    <scope>X-RAY CRYSTALLOGRAPHY (1.25 ANGSTROMS) IN COMPLEX WITH TOLRESTAT AND NADP</scope>
    <scope>FUNCTION</scope>
    <scope>BIOPHYSICOCHEMICAL PROPERTIES</scope>
    <scope>ACTIVITY REGULATION</scope>
    <scope>CATALYTIC ACTIVITY</scope>
    <scope>MUTAGENESIS OF LYS-125 AND VAL-301</scope>
</reference>
<reference key="18">
    <citation type="journal article" date="2011" name="BMC Syst. Biol.">
        <title>Initial characterization of the human central proteome.</title>
        <authorList>
            <person name="Burkard T.R."/>
            <person name="Planyavsky M."/>
            <person name="Kaupe I."/>
            <person name="Breitwieser F.P."/>
            <person name="Buerckstuemmer T."/>
            <person name="Bennett K.L."/>
            <person name="Superti-Furga G."/>
            <person name="Colinge J."/>
        </authorList>
    </citation>
    <scope>VARIANT [LARGE SCALE ANALYSIS] ASP-313</scope>
    <scope>IDENTIFICATION BY MASS SPECTROMETRY [LARGE SCALE ANALYSIS]</scope>
</reference>
<name>AK1BA_HUMAN</name>
<sequence length="316" mass="36020">MATFVELSTKAKMPIVGLGTWKSPLGKVKEAVKVAIDAGYRHIDCAYVYQNEHEVGEAIQEKIQEKAVKREDLFIVSKLWPTFFERPLVRKAFEKTLKDLKLSYLDVYLIHWPQGFKSGDDLFPKDDKGNAIGGKATFLDAWEAMEELVDEGLVKALGVSNFSHFQIEKLLNKPGLKYKPVTNQVECHPYLTQEKLIQYCHSKGITVTAYSPLGSPDRPWAKPEDPSLLEDPKIKEIAAKHKKTAAQVLIRFHIQRNVIVIPKSVTPARIVENIQVFDFKLSDEEMATILSFNRNWRACNVLQSSHLEDYPFNAEY</sequence>
<organism>
    <name type="scientific">Homo sapiens</name>
    <name type="common">Human</name>
    <dbReference type="NCBI Taxonomy" id="9606"/>
    <lineage>
        <taxon>Eukaryota</taxon>
        <taxon>Metazoa</taxon>
        <taxon>Chordata</taxon>
        <taxon>Craniata</taxon>
        <taxon>Vertebrata</taxon>
        <taxon>Euteleostomi</taxon>
        <taxon>Mammalia</taxon>
        <taxon>Eutheria</taxon>
        <taxon>Euarchontoglires</taxon>
        <taxon>Primates</taxon>
        <taxon>Haplorrhini</taxon>
        <taxon>Catarrhini</taxon>
        <taxon>Hominidae</taxon>
        <taxon>Homo</taxon>
    </lineage>
</organism>
<feature type="chain" id="PRO_0000124632" description="Aldo-keto reductase family 1 member B10">
    <location>
        <begin position="1"/>
        <end position="316"/>
    </location>
</feature>
<feature type="active site" description="Proton donor" evidence="5">
    <location>
        <position position="49"/>
    </location>
</feature>
<feature type="binding site" evidence="5">
    <location>
        <begin position="20"/>
        <end position="22"/>
    </location>
    <ligand>
        <name>NADP(+)</name>
        <dbReference type="ChEBI" id="CHEBI:58349"/>
    </ligand>
</feature>
<feature type="binding site" evidence="5">
    <location>
        <position position="44"/>
    </location>
    <ligand>
        <name>NADP(+)</name>
        <dbReference type="ChEBI" id="CHEBI:58349"/>
    </ligand>
</feature>
<feature type="binding site" evidence="5">
    <location>
        <position position="111"/>
    </location>
    <ligand>
        <name>substrate</name>
    </ligand>
</feature>
<feature type="binding site" evidence="5">
    <location>
        <begin position="160"/>
        <end position="161"/>
    </location>
    <ligand>
        <name>NADP(+)</name>
        <dbReference type="ChEBI" id="CHEBI:58349"/>
    </ligand>
</feature>
<feature type="binding site" evidence="5">
    <location>
        <position position="184"/>
    </location>
    <ligand>
        <name>NADP(+)</name>
        <dbReference type="ChEBI" id="CHEBI:58349"/>
    </ligand>
</feature>
<feature type="binding site" evidence="5">
    <location>
        <begin position="210"/>
        <end position="217"/>
    </location>
    <ligand>
        <name>NADP(+)</name>
        <dbReference type="ChEBI" id="CHEBI:58349"/>
    </ligand>
</feature>
<feature type="binding site" evidence="5">
    <location>
        <begin position="261"/>
        <end position="273"/>
    </location>
    <ligand>
        <name>NADP(+)</name>
        <dbReference type="ChEBI" id="CHEBI:58349"/>
    </ligand>
</feature>
<feature type="site" description="Lowers pKa of active site Tyr" evidence="1">
    <location>
        <position position="78"/>
    </location>
</feature>
<feature type="modified residue" description="N6-acetyllysine" evidence="16">
    <location>
        <position position="125"/>
    </location>
</feature>
<feature type="modified residue" description="N6-acetyllysine" evidence="16">
    <location>
        <position position="263"/>
    </location>
</feature>
<feature type="sequence variant" id="VAR_020077" description="In dbSNP:rs2303312.">
    <original>P</original>
    <variation>S</variation>
    <location>
        <position position="87"/>
    </location>
</feature>
<feature type="sequence variant" id="VAR_020078" description="In dbSNP:rs3735042.">
    <original>M</original>
    <variation>T</variation>
    <location>
        <position position="286"/>
    </location>
</feature>
<feature type="sequence variant" id="VAR_013287" description="In dbSNP:rs4728329." evidence="3 9 10 11 12 13 17">
    <original>N</original>
    <variation>D</variation>
    <location>
        <position position="313"/>
    </location>
</feature>
<feature type="mutagenesis site" description="Increased affinity and reduced catalytic activity towards all-trans-retinaldehyde." evidence="5">
    <original>K</original>
    <variation>L</variation>
    <location>
        <position position="125"/>
    </location>
</feature>
<feature type="mutagenesis site" description="Decreased affinity and reduced catalytic activity towards 4-hydroxynonenal." evidence="6">
    <original>C</original>
    <variation>S</variation>
    <location>
        <position position="299"/>
    </location>
</feature>
<feature type="mutagenesis site" description="Reduced catalytic activity towards all-trans-retinaldehyde." evidence="5">
    <original>V</original>
    <variation>L</variation>
    <location>
        <position position="301"/>
    </location>
</feature>
<feature type="sequence conflict" description="In Ref. 3; AAO13380." evidence="15" ref="3">
    <original>V</original>
    <variation>A</variation>
    <location>
        <position position="76"/>
    </location>
</feature>
<feature type="sequence conflict" description="In Ref. 3; AAO13380." evidence="15" ref="3">
    <original>L</original>
    <variation>P</variation>
    <location>
        <position position="100"/>
    </location>
</feature>
<feature type="sequence conflict" description="In Ref. 3; AAO13380." evidence="15" ref="3">
    <original>T</original>
    <variation>I</variation>
    <location>
        <position position="288"/>
    </location>
</feature>
<feature type="strand" evidence="18">
    <location>
        <begin position="4"/>
        <end position="6"/>
    </location>
</feature>
<feature type="turn" evidence="21">
    <location>
        <begin position="8"/>
        <end position="10"/>
    </location>
</feature>
<feature type="strand" evidence="18">
    <location>
        <begin position="12"/>
        <end position="19"/>
    </location>
</feature>
<feature type="turn" evidence="18">
    <location>
        <begin position="25"/>
        <end position="27"/>
    </location>
</feature>
<feature type="helix" evidence="18">
    <location>
        <begin position="28"/>
        <end position="37"/>
    </location>
</feature>
<feature type="strand" evidence="18">
    <location>
        <begin position="42"/>
        <end position="44"/>
    </location>
</feature>
<feature type="helix" evidence="18">
    <location>
        <begin position="47"/>
        <end position="49"/>
    </location>
</feature>
<feature type="helix" evidence="18">
    <location>
        <begin position="52"/>
        <end position="64"/>
    </location>
</feature>
<feature type="helix" evidence="18">
    <location>
        <begin position="70"/>
        <end position="72"/>
    </location>
</feature>
<feature type="strand" evidence="18">
    <location>
        <begin position="74"/>
        <end position="79"/>
    </location>
</feature>
<feature type="helix" evidence="20">
    <location>
        <begin position="81"/>
        <end position="83"/>
    </location>
</feature>
<feature type="helix" evidence="18">
    <location>
        <begin position="86"/>
        <end position="100"/>
    </location>
</feature>
<feature type="strand" evidence="18">
    <location>
        <begin position="105"/>
        <end position="111"/>
    </location>
</feature>
<feature type="strand" evidence="20">
    <location>
        <begin position="118"/>
        <end position="120"/>
    </location>
</feature>
<feature type="strand" evidence="18">
    <location>
        <begin position="127"/>
        <end position="131"/>
    </location>
</feature>
<feature type="helix" evidence="18">
    <location>
        <begin position="138"/>
        <end position="150"/>
    </location>
</feature>
<feature type="strand" evidence="18">
    <location>
        <begin position="153"/>
        <end position="161"/>
    </location>
</feature>
<feature type="helix" evidence="18">
    <location>
        <begin position="164"/>
        <end position="171"/>
    </location>
</feature>
<feature type="strand" evidence="18">
    <location>
        <begin position="181"/>
        <end position="186"/>
    </location>
</feature>
<feature type="helix" evidence="18">
    <location>
        <begin position="194"/>
        <end position="202"/>
    </location>
</feature>
<feature type="strand" evidence="18">
    <location>
        <begin position="206"/>
        <end position="211"/>
    </location>
</feature>
<feature type="strand" evidence="21">
    <location>
        <begin position="223"/>
        <end position="225"/>
    </location>
</feature>
<feature type="helix" evidence="18">
    <location>
        <begin position="228"/>
        <end position="230"/>
    </location>
</feature>
<feature type="helix" evidence="18">
    <location>
        <begin position="232"/>
        <end position="240"/>
    </location>
</feature>
<feature type="helix" evidence="18">
    <location>
        <begin position="245"/>
        <end position="254"/>
    </location>
</feature>
<feature type="turn" evidence="18">
    <location>
        <begin position="255"/>
        <end position="257"/>
    </location>
</feature>
<feature type="helix" evidence="18">
    <location>
        <begin position="267"/>
        <end position="274"/>
    </location>
</feature>
<feature type="helix" evidence="18">
    <location>
        <begin position="283"/>
        <end position="290"/>
    </location>
</feature>
<feature type="helix" evidence="18">
    <location>
        <begin position="302"/>
        <end position="304"/>
    </location>
</feature>
<feature type="strand" evidence="19">
    <location>
        <begin position="305"/>
        <end position="307"/>
    </location>
</feature>
<feature type="helix" evidence="19">
    <location>
        <begin position="311"/>
        <end position="313"/>
    </location>
</feature>
<comment type="function">
    <text evidence="2 5 6 7 10">Catalyzes the NADPH-dependent reduction of a wide variety of carbonyl-containing compounds to their corresponding alcohols (PubMed:12732097, PubMed:18087047, PubMed:19013440, PubMed:19563777, PubMed:9565553). Displays strong enzymatic activity toward all-trans-retinal, 9-cis-retinal, and 13-cis-retinal (PubMed:12732097, PubMed:18087047). Plays a critical role in detoxifying dietary and lipid-derived unsaturated carbonyls, such as crotonaldehyde, 4-hydroxynonenal, trans-2-hexenal, trans-2,4-hexadienal and their glutathione-conjugates carbonyls (GS-carbonyls) (PubMed:19013440, PubMed:19563777). Displays no reductase activity towards glucose (PubMed:12732097).</text>
</comment>
<comment type="catalytic activity">
    <reaction evidence="2 5">
        <text>all-trans-retinol + NADP(+) = all-trans-retinal + NADPH + H(+)</text>
        <dbReference type="Rhea" id="RHEA:25033"/>
        <dbReference type="ChEBI" id="CHEBI:15378"/>
        <dbReference type="ChEBI" id="CHEBI:17336"/>
        <dbReference type="ChEBI" id="CHEBI:17898"/>
        <dbReference type="ChEBI" id="CHEBI:57783"/>
        <dbReference type="ChEBI" id="CHEBI:58349"/>
        <dbReference type="EC" id="1.1.1.300"/>
    </reaction>
</comment>
<comment type="catalytic activity">
    <reaction evidence="2 5">
        <text>9-cis-retinol + NADP(+) = 9-cis-retinal + NADPH + H(+)</text>
        <dbReference type="Rhea" id="RHEA:54916"/>
        <dbReference type="ChEBI" id="CHEBI:15378"/>
        <dbReference type="ChEBI" id="CHEBI:57783"/>
        <dbReference type="ChEBI" id="CHEBI:58349"/>
        <dbReference type="ChEBI" id="CHEBI:78272"/>
        <dbReference type="ChEBI" id="CHEBI:78273"/>
    </reaction>
</comment>
<comment type="catalytic activity">
    <reaction evidence="2">
        <text>13-cis-retinol + NADP(+) = 13-cis-retinal + NADPH + H(+)</text>
        <dbReference type="Rhea" id="RHEA:54920"/>
        <dbReference type="ChEBI" id="CHEBI:15378"/>
        <dbReference type="ChEBI" id="CHEBI:45479"/>
        <dbReference type="ChEBI" id="CHEBI:45487"/>
        <dbReference type="ChEBI" id="CHEBI:57783"/>
        <dbReference type="ChEBI" id="CHEBI:58349"/>
    </reaction>
</comment>
<comment type="catalytic activity">
    <reaction evidence="7">
        <text>allyl alcohol + NADP(+) = acrolein + NADPH + H(+)</text>
        <dbReference type="Rhea" id="RHEA:12168"/>
        <dbReference type="ChEBI" id="CHEBI:15368"/>
        <dbReference type="ChEBI" id="CHEBI:15378"/>
        <dbReference type="ChEBI" id="CHEBI:16605"/>
        <dbReference type="ChEBI" id="CHEBI:57783"/>
        <dbReference type="ChEBI" id="CHEBI:58349"/>
        <dbReference type="EC" id="1.1.1.54"/>
    </reaction>
</comment>
<comment type="catalytic activity">
    <reaction evidence="6">
        <text>(E)-4-hydroxynon-2-en-1-ol + NADP(+) = (E)-4-hydroxynon-2-enal + NADPH + H(+)</text>
        <dbReference type="Rhea" id="RHEA:58416"/>
        <dbReference type="ChEBI" id="CHEBI:15378"/>
        <dbReference type="ChEBI" id="CHEBI:57783"/>
        <dbReference type="ChEBI" id="CHEBI:58349"/>
        <dbReference type="ChEBI" id="CHEBI:58968"/>
        <dbReference type="ChEBI" id="CHEBI:142617"/>
    </reaction>
</comment>
<comment type="catalytic activity">
    <reaction evidence="7">
        <text>a 4-hydroxynonen-1-ol + NADP(+) = a 4-hydroxynonenal + NADPH + H(+)</text>
        <dbReference type="Rhea" id="RHEA:58336"/>
        <dbReference type="ChEBI" id="CHEBI:15378"/>
        <dbReference type="ChEBI" id="CHEBI:57783"/>
        <dbReference type="ChEBI" id="CHEBI:58349"/>
        <dbReference type="ChEBI" id="CHEBI:142593"/>
        <dbReference type="ChEBI" id="CHEBI:142606"/>
    </reaction>
</comment>
<comment type="catalytic activity">
    <reaction evidence="7">
        <text>prenol + NADP(+) = 3-methyl-2-butenal + NADPH + H(+)</text>
        <dbReference type="Rhea" id="RHEA:58420"/>
        <dbReference type="ChEBI" id="CHEBI:15378"/>
        <dbReference type="ChEBI" id="CHEBI:15825"/>
        <dbReference type="ChEBI" id="CHEBI:16019"/>
        <dbReference type="ChEBI" id="CHEBI:57783"/>
        <dbReference type="ChEBI" id="CHEBI:58349"/>
    </reaction>
</comment>
<comment type="catalytic activity">
    <reaction evidence="7">
        <text>(E)-hex-2-en-1-ol + NADP(+) = (E)-hex-2-enal + NADPH + H(+)</text>
        <dbReference type="Rhea" id="RHEA:58424"/>
        <dbReference type="ChEBI" id="CHEBI:15378"/>
        <dbReference type="ChEBI" id="CHEBI:28913"/>
        <dbReference type="ChEBI" id="CHEBI:57783"/>
        <dbReference type="ChEBI" id="CHEBI:58349"/>
        <dbReference type="ChEBI" id="CHEBI:141205"/>
    </reaction>
</comment>
<comment type="catalytic activity">
    <reaction evidence="7">
        <text>(E,E)-2,4-hexadien-1-ol + NADP(+) = (E,E)-2,4-hexadienal + NADPH + H(+)</text>
        <dbReference type="Rhea" id="RHEA:58428"/>
        <dbReference type="ChEBI" id="CHEBI:15378"/>
        <dbReference type="ChEBI" id="CHEBI:57783"/>
        <dbReference type="ChEBI" id="CHEBI:58349"/>
        <dbReference type="ChEBI" id="CHEBI:82334"/>
        <dbReference type="ChEBI" id="CHEBI:142625"/>
    </reaction>
</comment>
<comment type="catalytic activity">
    <reaction evidence="6">
        <text>(E)-4-oxonon-2-en-1-ol + NADP(+) = (E)-4-oxonon-2-enal + NADPH + H(+)</text>
        <dbReference type="Rhea" id="RHEA:58432"/>
        <dbReference type="ChEBI" id="CHEBI:15378"/>
        <dbReference type="ChEBI" id="CHEBI:57783"/>
        <dbReference type="ChEBI" id="CHEBI:58349"/>
        <dbReference type="ChEBI" id="CHEBI:58972"/>
        <dbReference type="ChEBI" id="CHEBI:142624"/>
    </reaction>
</comment>
<comment type="catalytic activity">
    <reaction evidence="6">
        <text>4-methylpentan-1-ol + NADP(+) = 4-methylpentanal + NADPH + H(+)</text>
        <dbReference type="Rhea" id="RHEA:58436"/>
        <dbReference type="ChEBI" id="CHEBI:15378"/>
        <dbReference type="ChEBI" id="CHEBI:17998"/>
        <dbReference type="ChEBI" id="CHEBI:57783"/>
        <dbReference type="ChEBI" id="CHEBI:58349"/>
        <dbReference type="ChEBI" id="CHEBI:63910"/>
    </reaction>
</comment>
<comment type="activity regulation">
    <text evidence="2 5">Retinaldehyde reductase activity is inhibited by tolrestat.</text>
</comment>
<comment type="biophysicochemical properties">
    <kinetics>
        <KM evidence="5">6000 uM for D,L-glyceraldehyde</KM>
        <KM evidence="5">0.6 uM for all-trans-retinal</KM>
        <KM evidence="5">0.7 uM for 9-cis-retinal</KM>
        <KM evidence="2">37 uM for pyridine-3-aldehyde</KM>
        <KM evidence="7">110 uM for acrolein</KM>
        <KM evidence="7">87 uM for 3-methyl-2-butenal</KM>
        <KM evidence="7">30 uM for 4-hydroxynonenal</KM>
        <KM evidence="7">61 uM for (E)-2-hexenal</KM>
        <KM evidence="7">95 uM for (E,E)-2,4-hexadienal</KM>
        <KM evidence="7">532 uM for GS-acrolein</KM>
        <KM evidence="7">245 uM for GS-3-methyl-2-butenal</KM>
        <KM evidence="7">145 uM for GS-(E)-2-hexenal</KM>
        <KM evidence="7">77 uM for GS-(E,E)-2,4-hexadienal</KM>
        <KM evidence="6">330 uM for (E)-4-hydroxynon-2-enal</KM>
        <KM evidence="6">300 uM for (E)-4-oxonon-2-enal</KM>
        <KM evidence="6">50 uM for 4-methylpentanal</KM>
        <Vmax evidence="7">3122.0 nmol/min/mg enzyme with acrolein</Vmax>
        <Vmax evidence="7">2647.0 nmol/min/mg enzyme with 3-methyl-2-butenal as substrate</Vmax>
        <Vmax evidence="7">2658.0 nmol/min/mg enzyme with (E)-2-hexenal as substrate</Vmax>
        <Vmax evidence="7">2160.0 nmol/min/mg enzyme with (E,E)-2,4-hexadienal as substrate</Vmax>
        <Vmax evidence="7">3298.0 nmol/min/mg enzyme with 4-hydroxynonenal</Vmax>
        <Vmax evidence="7">64.0 nmol/min/mg enzyme with GS-acrolein</Vmax>
        <Vmax evidence="7">1960.0 nmol/min/mg enzyme with GS-3-methyl-2-butenal as substrate</Vmax>
        <Vmax evidence="7">2049.0 nmol/min/mg enzyme with GS-(E)-2-hexenal</Vmax>
        <Vmax evidence="7">4004.0 nmol/min/mg enzyme with GS-(E,E)-2,4-hexadienal as substrate</Vmax>
        <text evidence="2 5 6 7">kcat is 640 min(-1) for glyceraldehyde as substrate (PubMed:12732097). kcat is 185 min(-1) for pyridine-3-aldehyde as substrate (PubMed:12732097). kcat is 116 min(-1) for acrolein as substrate. kcat is 103 min(-1) for 3-methyl-2-butenal as substrate. kcat is 97 min(-1) for(E)-2-hexenal as substrate. kcat is 82 min(-1) for (E,E)-2,4-hexadienal as substrate. kcat is 120 min(-1) for 4-hydroxynonenal as substrate. kcat is 3 min(-1) for GS-acrolein as substrate. kcat is 70 min(-1) for GS-3-methyl-2-butenal as substrate. kcat is 71 min(-1) for GS-(E)-2-hexenal as substrate. kcat is 147 min(-1) for (E,E)-2,4-hexadienal as substrate (PubMed:19563777). kcat is 35 min(-1) for D,L-glyceraldehyde as substrate. kcat is 27 min(-1) for all-trans-retinal as substrate. kcat is 1 min(-1) for 9-cis-retinal as substrate (PubMed:18087047). kcat is 43 min(-1) for 4-hydroxynon-2-enal (PubMed:19013440). kcat is 40 min(-1) for (E)-4-oxonon-2-enal (PubMed:19013440). kcat is 25 min(-1) for 4-methylpentanal (PubMed:19013440).</text>
    </kinetics>
</comment>
<comment type="pathway">
    <text evidence="2 5">Cofactor metabolism; retinol metabolism.</text>
</comment>
<comment type="interaction">
    <interactant intactId="EBI-1572139">
        <id>O60218</id>
    </interactant>
    <interactant intactId="EBI-717681">
        <id>Q13085</id>
        <label>ACACA</label>
    </interactant>
    <organismsDiffer>false</organismsDiffer>
    <experiments>4</experiments>
</comment>
<comment type="interaction">
    <interactant intactId="EBI-1572139">
        <id>O60218</id>
    </interactant>
    <interactant intactId="EBI-51935374">
        <id>C9JRZ8</id>
        <label>AKR1B15</label>
    </interactant>
    <organismsDiffer>false</organismsDiffer>
    <experiments>2</experiments>
</comment>
<comment type="interaction">
    <interactant intactId="EBI-1572139">
        <id>O60218</id>
    </interactant>
    <interactant intactId="EBI-750109">
        <id>Q9NYB0</id>
        <label>TERF2IP</label>
    </interactant>
    <organismsDiffer>false</organismsDiffer>
    <experiments>2</experiments>
</comment>
<comment type="subcellular location">
    <subcellularLocation>
        <location evidence="8">Lysosome</location>
    </subcellularLocation>
    <subcellularLocation>
        <location evidence="8">Secreted</location>
    </subcellularLocation>
    <text>Secreted through a lysosome-mediated non-classical pathway.</text>
</comment>
<comment type="tissue specificity">
    <text evidence="10">Found in many tissues. Highly expressed in small intestine, colon and adrenal gland.</text>
</comment>
<comment type="induction">
    <text evidence="4 10">Overexpressed in certain types of cancers, including hepatocellular carcinoma and lung cancer associated with tobacco smoking.</text>
</comment>
<comment type="miscellaneous">
    <text evidence="15">Has no counterpart in murine and rat species.</text>
</comment>
<comment type="similarity">
    <text evidence="15">Belongs to the aldo/keto reductase family.</text>
</comment>
<protein>
    <recommendedName>
        <fullName>Aldo-keto reductase family 1 member B10</fullName>
        <ecNumber evidence="2">1.1.1.300</ecNumber>
        <ecNumber evidence="7">1.1.1.54</ecNumber>
    </recommendedName>
    <alternativeName>
        <fullName evidence="14">ARL-1</fullName>
    </alternativeName>
    <alternativeName>
        <fullName>Aldose reductase-like</fullName>
    </alternativeName>
    <alternativeName>
        <fullName>Aldose reductase-related protein</fullName>
        <shortName>ARP</shortName>
        <shortName>hARP</shortName>
    </alternativeName>
    <alternativeName>
        <fullName>Small intestine reductase</fullName>
        <shortName>SI reductase</shortName>
    </alternativeName>
</protein>
<gene>
    <name type="primary">AKR1B10</name>
    <name type="synonym">AKR1B11</name>
</gene>
<proteinExistence type="evidence at protein level"/>
<dbReference type="EC" id="1.1.1.300" evidence="2"/>
<dbReference type="EC" id="1.1.1.54" evidence="7"/>
<dbReference type="EMBL" id="U37100">
    <property type="protein sequence ID" value="AAC17469.1"/>
    <property type="molecule type" value="mRNA"/>
</dbReference>
<dbReference type="EMBL" id="AF052577">
    <property type="protein sequence ID" value="AAC36465.1"/>
    <property type="molecule type" value="mRNA"/>
</dbReference>
<dbReference type="EMBL" id="AF524864">
    <property type="protein sequence ID" value="AAO13380.1"/>
    <property type="molecule type" value="mRNA"/>
</dbReference>
<dbReference type="EMBL" id="BT006794">
    <property type="protein sequence ID" value="AAP35440.1"/>
    <property type="molecule type" value="mRNA"/>
</dbReference>
<dbReference type="EMBL" id="CR541801">
    <property type="protein sequence ID" value="CAG46600.1"/>
    <property type="molecule type" value="mRNA"/>
</dbReference>
<dbReference type="EMBL" id="AC078847">
    <property type="status" value="NOT_ANNOTATED_CDS"/>
    <property type="molecule type" value="Genomic_DNA"/>
</dbReference>
<dbReference type="EMBL" id="CH236950">
    <property type="protein sequence ID" value="EAL24069.1"/>
    <property type="molecule type" value="Genomic_DNA"/>
</dbReference>
<dbReference type="EMBL" id="CH471070">
    <property type="protein sequence ID" value="EAW83816.1"/>
    <property type="molecule type" value="Genomic_DNA"/>
</dbReference>
<dbReference type="EMBL" id="BC008837">
    <property type="protein sequence ID" value="AAH08837.1"/>
    <property type="molecule type" value="mRNA"/>
</dbReference>
<dbReference type="EMBL" id="AF044961">
    <property type="protein sequence ID" value="AAC15671.1"/>
    <property type="molecule type" value="mRNA"/>
</dbReference>
<dbReference type="CCDS" id="CCDS5832.1"/>
<dbReference type="RefSeq" id="NP_064695.3">
    <property type="nucleotide sequence ID" value="NM_020299.4"/>
</dbReference>
<dbReference type="PDB" id="1ZUA">
    <property type="method" value="X-ray"/>
    <property type="resolution" value="1.25 A"/>
    <property type="chains" value="X=1-316"/>
</dbReference>
<dbReference type="PDB" id="4GA8">
    <property type="method" value="X-ray"/>
    <property type="resolution" value="1.94 A"/>
    <property type="chains" value="A=1-316"/>
</dbReference>
<dbReference type="PDB" id="4GAB">
    <property type="method" value="X-ray"/>
    <property type="resolution" value="1.60 A"/>
    <property type="chains" value="A=1-316"/>
</dbReference>
<dbReference type="PDB" id="4GQ0">
    <property type="method" value="X-ray"/>
    <property type="resolution" value="2.10 A"/>
    <property type="chains" value="A=1-316"/>
</dbReference>
<dbReference type="PDB" id="4GQG">
    <property type="method" value="X-ray"/>
    <property type="resolution" value="1.92 A"/>
    <property type="chains" value="A=1-316"/>
</dbReference>
<dbReference type="PDB" id="4I5X">
    <property type="method" value="X-ray"/>
    <property type="resolution" value="2.10 A"/>
    <property type="chains" value="A=1-316"/>
</dbReference>
<dbReference type="PDB" id="4ICC">
    <property type="method" value="X-ray"/>
    <property type="resolution" value="1.75 A"/>
    <property type="chains" value="X=1-316"/>
</dbReference>
<dbReference type="PDB" id="4JIH">
    <property type="method" value="X-ray"/>
    <property type="resolution" value="2.30 A"/>
    <property type="chains" value="A=1-316"/>
</dbReference>
<dbReference type="PDB" id="4JII">
    <property type="method" value="X-ray"/>
    <property type="resolution" value="2.20 A"/>
    <property type="chains" value="X=1-316"/>
</dbReference>
<dbReference type="PDB" id="4WEV">
    <property type="method" value="X-ray"/>
    <property type="resolution" value="1.45 A"/>
    <property type="chains" value="X=1-316"/>
</dbReference>
<dbReference type="PDB" id="4XZL">
    <property type="method" value="X-ray"/>
    <property type="resolution" value="1.70 A"/>
    <property type="chains" value="X=1-316"/>
</dbReference>
<dbReference type="PDB" id="4XZM">
    <property type="method" value="X-ray"/>
    <property type="resolution" value="1.75 A"/>
    <property type="chains" value="X=1-316"/>
</dbReference>
<dbReference type="PDB" id="4XZN">
    <property type="method" value="X-ray"/>
    <property type="resolution" value="1.70 A"/>
    <property type="chains" value="X=1-316"/>
</dbReference>
<dbReference type="PDB" id="5LIK">
    <property type="method" value="X-ray"/>
    <property type="resolution" value="2.05 A"/>
    <property type="chains" value="X=1-316"/>
</dbReference>
<dbReference type="PDB" id="5LIU">
    <property type="method" value="X-ray"/>
    <property type="resolution" value="1.75 A"/>
    <property type="chains" value="X=1-316"/>
</dbReference>
<dbReference type="PDB" id="5LIW">
    <property type="method" value="X-ray"/>
    <property type="resolution" value="1.75 A"/>
    <property type="chains" value="X=1-316"/>
</dbReference>
<dbReference type="PDB" id="5LIX">
    <property type="method" value="X-ray"/>
    <property type="resolution" value="1.95 A"/>
    <property type="chains" value="X=1-316"/>
</dbReference>
<dbReference type="PDB" id="5LIY">
    <property type="method" value="X-ray"/>
    <property type="resolution" value="2.05 A"/>
    <property type="chains" value="X=1-316"/>
</dbReference>
<dbReference type="PDB" id="5M2F">
    <property type="method" value="X-ray"/>
    <property type="resolution" value="1.50 A"/>
    <property type="chains" value="X=1-316"/>
</dbReference>
<dbReference type="PDB" id="5Y7N">
    <property type="method" value="X-ray"/>
    <property type="resolution" value="2.50 A"/>
    <property type="chains" value="A=1-316"/>
</dbReference>
<dbReference type="PDBsum" id="1ZUA"/>
<dbReference type="PDBsum" id="4GA8"/>
<dbReference type="PDBsum" id="4GAB"/>
<dbReference type="PDBsum" id="4GQ0"/>
<dbReference type="PDBsum" id="4GQG"/>
<dbReference type="PDBsum" id="4I5X"/>
<dbReference type="PDBsum" id="4ICC"/>
<dbReference type="PDBsum" id="4JIH"/>
<dbReference type="PDBsum" id="4JII"/>
<dbReference type="PDBsum" id="4WEV"/>
<dbReference type="PDBsum" id="4XZL"/>
<dbReference type="PDBsum" id="4XZM"/>
<dbReference type="PDBsum" id="4XZN"/>
<dbReference type="PDBsum" id="5LIK"/>
<dbReference type="PDBsum" id="5LIU"/>
<dbReference type="PDBsum" id="5LIW"/>
<dbReference type="PDBsum" id="5LIX"/>
<dbReference type="PDBsum" id="5LIY"/>
<dbReference type="PDBsum" id="5M2F"/>
<dbReference type="PDBsum" id="5Y7N"/>
<dbReference type="SMR" id="O60218"/>
<dbReference type="BioGRID" id="121325">
    <property type="interactions" value="59"/>
</dbReference>
<dbReference type="FunCoup" id="O60218">
    <property type="interactions" value="732"/>
</dbReference>
<dbReference type="IntAct" id="O60218">
    <property type="interactions" value="33"/>
</dbReference>
<dbReference type="MINT" id="O60218"/>
<dbReference type="STRING" id="9606.ENSP00000352584"/>
<dbReference type="BindingDB" id="O60218"/>
<dbReference type="ChEMBL" id="CHEMBL5983"/>
<dbReference type="DrugBank" id="DB00997">
    <property type="generic name" value="Doxorubicin"/>
</dbReference>
<dbReference type="DrugBank" id="DB06246">
    <property type="generic name" value="Exisulind"/>
</dbReference>
<dbReference type="DrugBank" id="DB02021">
    <property type="generic name" value="Fidarestat"/>
</dbReference>
<dbReference type="DrugBank" id="DB06077">
    <property type="generic name" value="Lumateperone"/>
</dbReference>
<dbReference type="DrugBank" id="DB03461">
    <property type="generic name" value="Nicotinamide adenine dinucleotide phosphate"/>
</dbReference>
<dbReference type="DrugBank" id="DB00605">
    <property type="generic name" value="Sulindac"/>
</dbReference>
<dbReference type="DrugBank" id="DB02383">
    <property type="generic name" value="Tolrestat"/>
</dbReference>
<dbReference type="DrugBank" id="DB08772">
    <property type="generic name" value="Zopolrestat"/>
</dbReference>
<dbReference type="DrugCentral" id="O60218"/>
<dbReference type="SwissLipids" id="SLP:000001873"/>
<dbReference type="GlyGen" id="O60218">
    <property type="glycosylation" value="3 sites, 1 O-linked glycan (1 site)"/>
</dbReference>
<dbReference type="iPTMnet" id="O60218"/>
<dbReference type="PhosphoSitePlus" id="O60218"/>
<dbReference type="BioMuta" id="AKR1B10"/>
<dbReference type="jPOST" id="O60218"/>
<dbReference type="MassIVE" id="O60218"/>
<dbReference type="PaxDb" id="9606-ENSP00000352584"/>
<dbReference type="PeptideAtlas" id="O60218"/>
<dbReference type="PRIDE" id="O60218"/>
<dbReference type="ProteomicsDB" id="49247"/>
<dbReference type="Antibodypedia" id="18084">
    <property type="antibodies" value="371 antibodies from 34 providers"/>
</dbReference>
<dbReference type="DNASU" id="57016"/>
<dbReference type="Ensembl" id="ENST00000359579.5">
    <property type="protein sequence ID" value="ENSP00000352584.4"/>
    <property type="gene ID" value="ENSG00000198074.10"/>
</dbReference>
<dbReference type="GeneID" id="57016"/>
<dbReference type="KEGG" id="hsa:57016"/>
<dbReference type="MANE-Select" id="ENST00000359579.5">
    <property type="protein sequence ID" value="ENSP00000352584.4"/>
    <property type="RefSeq nucleotide sequence ID" value="NM_020299.5"/>
    <property type="RefSeq protein sequence ID" value="NP_064695.3"/>
</dbReference>
<dbReference type="UCSC" id="uc003vrr.4">
    <property type="organism name" value="human"/>
</dbReference>
<dbReference type="AGR" id="HGNC:382"/>
<dbReference type="CTD" id="57016"/>
<dbReference type="DisGeNET" id="57016"/>
<dbReference type="GeneCards" id="AKR1B10"/>
<dbReference type="HGNC" id="HGNC:382">
    <property type="gene designation" value="AKR1B10"/>
</dbReference>
<dbReference type="HPA" id="ENSG00000198074">
    <property type="expression patterns" value="Tissue enhanced (esophagus, intestine, stomach)"/>
</dbReference>
<dbReference type="MIM" id="604707">
    <property type="type" value="gene"/>
</dbReference>
<dbReference type="neXtProt" id="NX_O60218"/>
<dbReference type="OpenTargets" id="ENSG00000198074"/>
<dbReference type="PharmGKB" id="PA24676"/>
<dbReference type="VEuPathDB" id="HostDB:ENSG00000198074"/>
<dbReference type="eggNOG" id="KOG1577">
    <property type="taxonomic scope" value="Eukaryota"/>
</dbReference>
<dbReference type="GeneTree" id="ENSGT00940000154773"/>
<dbReference type="HOGENOM" id="CLU_023205_0_0_1"/>
<dbReference type="InParanoid" id="O60218"/>
<dbReference type="OMA" id="WGYDIFE"/>
<dbReference type="OrthoDB" id="416253at2759"/>
<dbReference type="PAN-GO" id="O60218">
    <property type="GO annotations" value="3 GO annotations based on evolutionary models"/>
</dbReference>
<dbReference type="PhylomeDB" id="O60218"/>
<dbReference type="TreeFam" id="TF106492"/>
<dbReference type="BRENDA" id="1.1.1.21">
    <property type="organism ID" value="2681"/>
</dbReference>
<dbReference type="PathwayCommons" id="O60218"/>
<dbReference type="Reactome" id="R-HSA-975634">
    <property type="pathway name" value="Retinoid metabolism and transport"/>
</dbReference>
<dbReference type="SABIO-RK" id="O60218"/>
<dbReference type="SignaLink" id="O60218"/>
<dbReference type="UniPathway" id="UPA00912"/>
<dbReference type="BioGRID-ORCS" id="57016">
    <property type="hits" value="9 hits in 1111 CRISPR screens"/>
</dbReference>
<dbReference type="CD-CODE" id="91857CE7">
    <property type="entry name" value="Nucleolus"/>
</dbReference>
<dbReference type="ChiTaRS" id="AKR1B10">
    <property type="organism name" value="human"/>
</dbReference>
<dbReference type="EvolutionaryTrace" id="O60218"/>
<dbReference type="GeneWiki" id="AKR1B10"/>
<dbReference type="GenomeRNAi" id="57016"/>
<dbReference type="Pharos" id="O60218">
    <property type="development level" value="Tchem"/>
</dbReference>
<dbReference type="PRO" id="PR:O60218"/>
<dbReference type="Proteomes" id="UP000005640">
    <property type="component" value="Chromosome 7"/>
</dbReference>
<dbReference type="RNAct" id="O60218">
    <property type="molecule type" value="protein"/>
</dbReference>
<dbReference type="Bgee" id="ENSG00000198074">
    <property type="expression patterns" value="Expressed in jejunal mucosa and 137 other cell types or tissues"/>
</dbReference>
<dbReference type="GO" id="GO:0005829">
    <property type="term" value="C:cytosol"/>
    <property type="evidence" value="ECO:0000318"/>
    <property type="project" value="GO_Central"/>
</dbReference>
<dbReference type="GO" id="GO:0005576">
    <property type="term" value="C:extracellular region"/>
    <property type="evidence" value="ECO:0000314"/>
    <property type="project" value="UniProtKB"/>
</dbReference>
<dbReference type="GO" id="GO:0005764">
    <property type="term" value="C:lysosome"/>
    <property type="evidence" value="ECO:0000314"/>
    <property type="project" value="UniProtKB"/>
</dbReference>
<dbReference type="GO" id="GO:0005739">
    <property type="term" value="C:mitochondrion"/>
    <property type="evidence" value="ECO:0000318"/>
    <property type="project" value="GO_Central"/>
</dbReference>
<dbReference type="GO" id="GO:0008106">
    <property type="term" value="F:alcohol dehydrogenase (NADP+) activity"/>
    <property type="evidence" value="ECO:0000314"/>
    <property type="project" value="UniProtKB"/>
</dbReference>
<dbReference type="GO" id="GO:0004033">
    <property type="term" value="F:aldo-keto reductase (NADPH) activity"/>
    <property type="evidence" value="ECO:0000304"/>
    <property type="project" value="UniProtKB"/>
</dbReference>
<dbReference type="GO" id="GO:0004032">
    <property type="term" value="F:aldose reductase (NADPH) activity"/>
    <property type="evidence" value="ECO:0000318"/>
    <property type="project" value="GO_Central"/>
</dbReference>
<dbReference type="GO" id="GO:0052650">
    <property type="term" value="F:all-trans-retinol dehydrogenase (NADP+) activity"/>
    <property type="evidence" value="ECO:0000314"/>
    <property type="project" value="UniProtKB"/>
</dbReference>
<dbReference type="GO" id="GO:0047655">
    <property type="term" value="F:allyl-alcohol dehydrogenase activity"/>
    <property type="evidence" value="ECO:0007669"/>
    <property type="project" value="UniProtKB-EC"/>
</dbReference>
<dbReference type="GO" id="GO:0045550">
    <property type="term" value="F:geranylgeranyl reductase activity"/>
    <property type="evidence" value="ECO:0000314"/>
    <property type="project" value="UniProtKB"/>
</dbReference>
<dbReference type="GO" id="GO:0047718">
    <property type="term" value="F:indanol dehydrogenase activity"/>
    <property type="evidence" value="ECO:0000314"/>
    <property type="project" value="UniProtKB"/>
</dbReference>
<dbReference type="GO" id="GO:0001758">
    <property type="term" value="F:retinal dehydrogenase activity"/>
    <property type="evidence" value="ECO:0000314"/>
    <property type="project" value="UniProtKB"/>
</dbReference>
<dbReference type="GO" id="GO:0110095">
    <property type="term" value="P:cellular detoxification of aldehyde"/>
    <property type="evidence" value="ECO:0000314"/>
    <property type="project" value="UniProtKB"/>
</dbReference>
<dbReference type="GO" id="GO:0044597">
    <property type="term" value="P:daunorubicin metabolic process"/>
    <property type="evidence" value="ECO:0000315"/>
    <property type="project" value="UniProtKB"/>
</dbReference>
<dbReference type="GO" id="GO:0044598">
    <property type="term" value="P:doxorubicin metabolic process"/>
    <property type="evidence" value="ECO:0000315"/>
    <property type="project" value="UniProtKB"/>
</dbReference>
<dbReference type="GO" id="GO:0016488">
    <property type="term" value="P:farnesol catabolic process"/>
    <property type="evidence" value="ECO:0000314"/>
    <property type="project" value="UniProtKB"/>
</dbReference>
<dbReference type="GO" id="GO:0001523">
    <property type="term" value="P:retinoid metabolic process"/>
    <property type="evidence" value="ECO:0000314"/>
    <property type="project" value="UniProtKB"/>
</dbReference>
<dbReference type="CDD" id="cd19107">
    <property type="entry name" value="AKR_AKR1B1-19"/>
    <property type="match status" value="1"/>
</dbReference>
<dbReference type="FunFam" id="3.20.20.100:FF:000068">
    <property type="entry name" value="Aldo-keto reductase family 1 member B10"/>
    <property type="match status" value="1"/>
</dbReference>
<dbReference type="Gene3D" id="3.20.20.100">
    <property type="entry name" value="NADP-dependent oxidoreductase domain"/>
    <property type="match status" value="1"/>
</dbReference>
<dbReference type="InterPro" id="IPR020471">
    <property type="entry name" value="AKR"/>
</dbReference>
<dbReference type="InterPro" id="IPR018170">
    <property type="entry name" value="Aldo/ket_reductase_CS"/>
</dbReference>
<dbReference type="InterPro" id="IPR023210">
    <property type="entry name" value="NADP_OxRdtase_dom"/>
</dbReference>
<dbReference type="InterPro" id="IPR036812">
    <property type="entry name" value="NADP_OxRdtase_dom_sf"/>
</dbReference>
<dbReference type="PANTHER" id="PTHR11732">
    <property type="entry name" value="ALDO/KETO REDUCTASE"/>
    <property type="match status" value="1"/>
</dbReference>
<dbReference type="Pfam" id="PF00248">
    <property type="entry name" value="Aldo_ket_red"/>
    <property type="match status" value="1"/>
</dbReference>
<dbReference type="PIRSF" id="PIRSF000097">
    <property type="entry name" value="AKR"/>
    <property type="match status" value="1"/>
</dbReference>
<dbReference type="PRINTS" id="PR00069">
    <property type="entry name" value="ALDKETRDTASE"/>
</dbReference>
<dbReference type="SUPFAM" id="SSF51430">
    <property type="entry name" value="NAD(P)-linked oxidoreductase"/>
    <property type="match status" value="1"/>
</dbReference>
<dbReference type="PROSITE" id="PS00798">
    <property type="entry name" value="ALDOKETO_REDUCTASE_1"/>
    <property type="match status" value="1"/>
</dbReference>
<dbReference type="PROSITE" id="PS00062">
    <property type="entry name" value="ALDOKETO_REDUCTASE_2"/>
    <property type="match status" value="1"/>
</dbReference>
<dbReference type="PROSITE" id="PS00063">
    <property type="entry name" value="ALDOKETO_REDUCTASE_3"/>
    <property type="match status" value="1"/>
</dbReference>
<evidence type="ECO:0000250" key="1">
    <source>
        <dbReference type="UniProtKB" id="P14550"/>
    </source>
</evidence>
<evidence type="ECO:0000269" key="2">
    <source>
    </source>
</evidence>
<evidence type="ECO:0000269" key="3">
    <source>
    </source>
</evidence>
<evidence type="ECO:0000269" key="4">
    <source>
    </source>
</evidence>
<evidence type="ECO:0000269" key="5">
    <source>
    </source>
</evidence>
<evidence type="ECO:0000269" key="6">
    <source>
    </source>
</evidence>
<evidence type="ECO:0000269" key="7">
    <source>
    </source>
</evidence>
<evidence type="ECO:0000269" key="8">
    <source>
    </source>
</evidence>
<evidence type="ECO:0000269" key="9">
    <source>
    </source>
</evidence>
<evidence type="ECO:0000269" key="10">
    <source>
    </source>
</evidence>
<evidence type="ECO:0000269" key="11">
    <source ref="3"/>
</evidence>
<evidence type="ECO:0000269" key="12">
    <source ref="4"/>
</evidence>
<evidence type="ECO:0000269" key="13">
    <source ref="5"/>
</evidence>
<evidence type="ECO:0000303" key="14">
    <source>
    </source>
</evidence>
<evidence type="ECO:0000305" key="15"/>
<evidence type="ECO:0007744" key="16">
    <source>
    </source>
</evidence>
<evidence type="ECO:0007744" key="17">
    <source>
    </source>
</evidence>
<evidence type="ECO:0007829" key="18">
    <source>
        <dbReference type="PDB" id="1ZUA"/>
    </source>
</evidence>
<evidence type="ECO:0007829" key="19">
    <source>
        <dbReference type="PDB" id="4GAB"/>
    </source>
</evidence>
<evidence type="ECO:0007829" key="20">
    <source>
        <dbReference type="PDB" id="4WEV"/>
    </source>
</evidence>
<evidence type="ECO:0007829" key="21">
    <source>
        <dbReference type="PDB" id="5Y7N"/>
    </source>
</evidence>
<keyword id="KW-0002">3D-structure</keyword>
<keyword id="KW-0007">Acetylation</keyword>
<keyword id="KW-0443">Lipid metabolism</keyword>
<keyword id="KW-0458">Lysosome</keyword>
<keyword id="KW-0521">NADP</keyword>
<keyword id="KW-0560">Oxidoreductase</keyword>
<keyword id="KW-1267">Proteomics identification</keyword>
<keyword id="KW-1185">Reference proteome</keyword>
<keyword id="KW-0964">Secreted</keyword>
<accession>O60218</accession>
<accession>A4D1P1</accession>
<accession>O75890</accession>
<accession>Q6FHF3</accession>
<accession>Q8IWZ1</accession>